<organism>
    <name type="scientific">Halobacterium salinarum (strain ATCC 700922 / JCM 11081 / NRC-1)</name>
    <name type="common">Halobacterium halobium</name>
    <dbReference type="NCBI Taxonomy" id="64091"/>
    <lineage>
        <taxon>Archaea</taxon>
        <taxon>Methanobacteriati</taxon>
        <taxon>Methanobacteriota</taxon>
        <taxon>Stenosarchaea group</taxon>
        <taxon>Halobacteria</taxon>
        <taxon>Halobacteriales</taxon>
        <taxon>Halobacteriaceae</taxon>
        <taxon>Halobacterium</taxon>
        <taxon>Halobacterium salinarum NRC-34001</taxon>
    </lineage>
</organism>
<evidence type="ECO:0000255" key="1">
    <source>
        <dbReference type="HAMAP-Rule" id="MF_00588"/>
    </source>
</evidence>
<accession>Q9HQ32</accession>
<protein>
    <recommendedName>
        <fullName evidence="1">Glutamyl-tRNA(Gln) amidotransferase subunit E</fullName>
        <shortName evidence="1">Glu-ADT subunit E</shortName>
        <ecNumber evidence="1">6.3.5.-</ecNumber>
    </recommendedName>
</protein>
<name>GATE_HALSA</name>
<gene>
    <name evidence="1" type="primary">gatE</name>
    <name type="ordered locus">VNG_1352G</name>
</gene>
<dbReference type="EC" id="6.3.5.-" evidence="1"/>
<dbReference type="EMBL" id="AE004437">
    <property type="protein sequence ID" value="AAG19685.1"/>
    <property type="molecule type" value="Genomic_DNA"/>
</dbReference>
<dbReference type="PIR" id="A84290">
    <property type="entry name" value="A84290"/>
</dbReference>
<dbReference type="RefSeq" id="WP_010902981.1">
    <property type="nucleotide sequence ID" value="NC_002607.1"/>
</dbReference>
<dbReference type="SMR" id="Q9HQ32"/>
<dbReference type="FunCoup" id="Q9HQ32">
    <property type="interactions" value="19"/>
</dbReference>
<dbReference type="STRING" id="64091.VNG_1352G"/>
<dbReference type="PaxDb" id="64091-VNG_1352G"/>
<dbReference type="GeneID" id="68694090"/>
<dbReference type="KEGG" id="hal:VNG_1352G"/>
<dbReference type="PATRIC" id="fig|64091.14.peg.1033"/>
<dbReference type="HOGENOM" id="CLU_030702_0_0_2"/>
<dbReference type="InParanoid" id="Q9HQ32"/>
<dbReference type="OrthoDB" id="7316at2157"/>
<dbReference type="PhylomeDB" id="Q9HQ32"/>
<dbReference type="Proteomes" id="UP000000554">
    <property type="component" value="Chromosome"/>
</dbReference>
<dbReference type="GO" id="GO:0005737">
    <property type="term" value="C:cytoplasm"/>
    <property type="evidence" value="ECO:0007669"/>
    <property type="project" value="InterPro"/>
</dbReference>
<dbReference type="GO" id="GO:0004812">
    <property type="term" value="F:aminoacyl-tRNA ligase activity"/>
    <property type="evidence" value="ECO:0007669"/>
    <property type="project" value="InterPro"/>
</dbReference>
<dbReference type="GO" id="GO:0005524">
    <property type="term" value="F:ATP binding"/>
    <property type="evidence" value="ECO:0007669"/>
    <property type="project" value="UniProtKB-KW"/>
</dbReference>
<dbReference type="GO" id="GO:0050567">
    <property type="term" value="F:glutaminyl-tRNA synthase (glutamine-hydrolyzing) activity"/>
    <property type="evidence" value="ECO:0000318"/>
    <property type="project" value="GO_Central"/>
</dbReference>
<dbReference type="GO" id="GO:0070681">
    <property type="term" value="P:glutaminyl-tRNAGln biosynthesis via transamidation"/>
    <property type="evidence" value="ECO:0000318"/>
    <property type="project" value="GO_Central"/>
</dbReference>
<dbReference type="GO" id="GO:0006412">
    <property type="term" value="P:translation"/>
    <property type="evidence" value="ECO:0007669"/>
    <property type="project" value="UniProtKB-UniRule"/>
</dbReference>
<dbReference type="FunFam" id="1.10.10.410:FF:000003">
    <property type="entry name" value="Glutamyl-tRNA(Gln) amidotransferase subunit E"/>
    <property type="match status" value="1"/>
</dbReference>
<dbReference type="FunFam" id="1.10.150.380:FF:000002">
    <property type="entry name" value="Glutamyl-tRNA(Gln) amidotransferase subunit E"/>
    <property type="match status" value="1"/>
</dbReference>
<dbReference type="FunFam" id="3.30.1360.30:FF:000003">
    <property type="entry name" value="Glutamyl-tRNA(Gln) amidotransferase subunit E"/>
    <property type="match status" value="1"/>
</dbReference>
<dbReference type="Gene3D" id="1.10.10.410">
    <property type="match status" value="1"/>
</dbReference>
<dbReference type="Gene3D" id="3.30.1360.30">
    <property type="entry name" value="GAD-like domain"/>
    <property type="match status" value="1"/>
</dbReference>
<dbReference type="Gene3D" id="1.10.150.380">
    <property type="entry name" value="GatB domain, N-terminal subdomain"/>
    <property type="match status" value="1"/>
</dbReference>
<dbReference type="HAMAP" id="MF_00588">
    <property type="entry name" value="GatE"/>
    <property type="match status" value="1"/>
</dbReference>
<dbReference type="InterPro" id="IPR017959">
    <property type="entry name" value="Asn/Gln-tRNA_amidoTrfase_suB/E"/>
</dbReference>
<dbReference type="InterPro" id="IPR006075">
    <property type="entry name" value="Asn/Gln-tRNA_Trfase_suB/E_cat"/>
</dbReference>
<dbReference type="InterPro" id="IPR018027">
    <property type="entry name" value="Asn/Gln_amidotransferase"/>
</dbReference>
<dbReference type="InterPro" id="IPR003789">
    <property type="entry name" value="Asn/Gln_tRNA_amidoTrase-B-like"/>
</dbReference>
<dbReference type="InterPro" id="IPR004115">
    <property type="entry name" value="GAD-like_sf"/>
</dbReference>
<dbReference type="InterPro" id="IPR029351">
    <property type="entry name" value="GAD_dom"/>
</dbReference>
<dbReference type="InterPro" id="IPR042114">
    <property type="entry name" value="GatB_C_1"/>
</dbReference>
<dbReference type="InterPro" id="IPR023168">
    <property type="entry name" value="GatB_Yqey_C_2"/>
</dbReference>
<dbReference type="InterPro" id="IPR004414">
    <property type="entry name" value="GatE"/>
</dbReference>
<dbReference type="InterPro" id="IPR017958">
    <property type="entry name" value="Gln-tRNA_amidoTrfase_suB_CS"/>
</dbReference>
<dbReference type="InterPro" id="IPR014746">
    <property type="entry name" value="Gln_synth/guanido_kin_cat_dom"/>
</dbReference>
<dbReference type="NCBIfam" id="TIGR00134">
    <property type="entry name" value="gatE_arch"/>
    <property type="match status" value="1"/>
</dbReference>
<dbReference type="NCBIfam" id="NF003107">
    <property type="entry name" value="PRK04028.1"/>
    <property type="match status" value="1"/>
</dbReference>
<dbReference type="PANTHER" id="PTHR11659">
    <property type="entry name" value="GLUTAMYL-TRNA GLN AMIDOTRANSFERASE SUBUNIT B MITOCHONDRIAL AND PROKARYOTIC PET112-RELATED"/>
    <property type="match status" value="1"/>
</dbReference>
<dbReference type="PANTHER" id="PTHR11659:SF2">
    <property type="entry name" value="GLUTAMYL-TRNA(GLN) AMIDOTRANSFERASE SUBUNIT E"/>
    <property type="match status" value="1"/>
</dbReference>
<dbReference type="Pfam" id="PF02938">
    <property type="entry name" value="GAD"/>
    <property type="match status" value="1"/>
</dbReference>
<dbReference type="Pfam" id="PF02934">
    <property type="entry name" value="GatB_N"/>
    <property type="match status" value="1"/>
</dbReference>
<dbReference type="Pfam" id="PF02637">
    <property type="entry name" value="GatB_Yqey"/>
    <property type="match status" value="1"/>
</dbReference>
<dbReference type="SMART" id="SM00845">
    <property type="entry name" value="GatB_Yqey"/>
    <property type="match status" value="1"/>
</dbReference>
<dbReference type="SUPFAM" id="SSF55261">
    <property type="entry name" value="GAD domain-like"/>
    <property type="match status" value="1"/>
</dbReference>
<dbReference type="SUPFAM" id="SSF89095">
    <property type="entry name" value="GatB/YqeY motif"/>
    <property type="match status" value="1"/>
</dbReference>
<dbReference type="SUPFAM" id="SSF55931">
    <property type="entry name" value="Glutamine synthetase/guanido kinase"/>
    <property type="match status" value="1"/>
</dbReference>
<dbReference type="PROSITE" id="PS01234">
    <property type="entry name" value="GATB"/>
    <property type="match status" value="1"/>
</dbReference>
<keyword id="KW-0067">ATP-binding</keyword>
<keyword id="KW-0436">Ligase</keyword>
<keyword id="KW-0547">Nucleotide-binding</keyword>
<keyword id="KW-0648">Protein biosynthesis</keyword>
<keyword id="KW-1185">Reference proteome</keyword>
<comment type="function">
    <text evidence="1">Allows the formation of correctly charged Gln-tRNA(Gln) through the transamidation of misacylated Glu-tRNA(Gln) in organisms which lack glutaminyl-tRNA synthetase. The reaction takes place in the presence of glutamine and ATP through an activated gamma-phospho-Glu-tRNA(Gln). The GatDE system is specific for glutamate and does not act on aspartate.</text>
</comment>
<comment type="catalytic activity">
    <reaction evidence="1">
        <text>L-glutamyl-tRNA(Gln) + L-glutamine + ATP + H2O = L-glutaminyl-tRNA(Gln) + L-glutamate + ADP + phosphate + H(+)</text>
        <dbReference type="Rhea" id="RHEA:17521"/>
        <dbReference type="Rhea" id="RHEA-COMP:9681"/>
        <dbReference type="Rhea" id="RHEA-COMP:9684"/>
        <dbReference type="ChEBI" id="CHEBI:15377"/>
        <dbReference type="ChEBI" id="CHEBI:15378"/>
        <dbReference type="ChEBI" id="CHEBI:29985"/>
        <dbReference type="ChEBI" id="CHEBI:30616"/>
        <dbReference type="ChEBI" id="CHEBI:43474"/>
        <dbReference type="ChEBI" id="CHEBI:58359"/>
        <dbReference type="ChEBI" id="CHEBI:78520"/>
        <dbReference type="ChEBI" id="CHEBI:78521"/>
        <dbReference type="ChEBI" id="CHEBI:456216"/>
    </reaction>
</comment>
<comment type="subunit">
    <text evidence="1">Heterodimer of GatD and GatE.</text>
</comment>
<comment type="similarity">
    <text evidence="1">Belongs to the GatB/GatE family. GatE subfamily.</text>
</comment>
<sequence length="622" mass="66826">MTEFDYDELGLVAGLEIHQQLDTATKLFCACPTTRREPAEADRTFTRYLHPTRSELGEIDEAALEESRVEREFEYLAYDTTCLVEEDDEPPHRLDEDALAAALEIGHLLGMDAVDRAHVMRKVVIDGSNTGGFQRSTMVAEGGAIDTSEGPVGIEDLMLEEESAQRIEDREDGVLYSLDRLGIPLVEIGTKPDISSPAQAREAAERIGMLLRSTGKVKRGLGTIRQDVNVSIADGARVEMKGVQSLDDIDDLVREEVRRQVELLDIVDELDARDAAVGKPRDVTDVFADTESGVIRGALDDGGEVHAVPLHGFDGLVGRELQADRRLGTEFSDHATRHGAGGIFHTDELPAYGVTAAEVAALRDAVGAGEDDAVAIVADDPETAAQSIQAVAERAETAMAGVPEETRGANDDGTSKYLRPLPGAARMYPETDVPPVDPDPSAVETPELLTEKVERYQADFDLDAGLAEQVAYGRRWQLFEQQVEAGVDATLAAQTLESTVTELRRDDVPVGRLTDAHFRGVLGLVADGDLAQEGVPELLAALAEQPGSDPAVLAEELGLGSAAEDEVREAVVGVVERNSDQVAAEGMGAFSALMGECMGALRGKADGDLVSEVLREEIQQRS</sequence>
<proteinExistence type="inferred from homology"/>
<reference key="1">
    <citation type="journal article" date="2000" name="Proc. Natl. Acad. Sci. U.S.A.">
        <title>Genome sequence of Halobacterium species NRC-1.</title>
        <authorList>
            <person name="Ng W.V."/>
            <person name="Kennedy S.P."/>
            <person name="Mahairas G.G."/>
            <person name="Berquist B."/>
            <person name="Pan M."/>
            <person name="Shukla H.D."/>
            <person name="Lasky S.R."/>
            <person name="Baliga N.S."/>
            <person name="Thorsson V."/>
            <person name="Sbrogna J."/>
            <person name="Swartzell S."/>
            <person name="Weir D."/>
            <person name="Hall J."/>
            <person name="Dahl T.A."/>
            <person name="Welti R."/>
            <person name="Goo Y.A."/>
            <person name="Leithauser B."/>
            <person name="Keller K."/>
            <person name="Cruz R."/>
            <person name="Danson M.J."/>
            <person name="Hough D.W."/>
            <person name="Maddocks D.G."/>
            <person name="Jablonski P.E."/>
            <person name="Krebs M.P."/>
            <person name="Angevine C.M."/>
            <person name="Dale H."/>
            <person name="Isenbarger T.A."/>
            <person name="Peck R.F."/>
            <person name="Pohlschroder M."/>
            <person name="Spudich J.L."/>
            <person name="Jung K.-H."/>
            <person name="Alam M."/>
            <person name="Freitas T."/>
            <person name="Hou S."/>
            <person name="Daniels C.J."/>
            <person name="Dennis P.P."/>
            <person name="Omer A.D."/>
            <person name="Ebhardt H."/>
            <person name="Lowe T.M."/>
            <person name="Liang P."/>
            <person name="Riley M."/>
            <person name="Hood L."/>
            <person name="DasSarma S."/>
        </authorList>
    </citation>
    <scope>NUCLEOTIDE SEQUENCE [LARGE SCALE GENOMIC DNA]</scope>
    <source>
        <strain>ATCC 700922 / JCM 11081 / NRC-1</strain>
    </source>
</reference>
<feature type="chain" id="PRO_0000140070" description="Glutamyl-tRNA(Gln) amidotransferase subunit E">
    <location>
        <begin position="1"/>
        <end position="622"/>
    </location>
</feature>